<protein>
    <recommendedName>
        <fullName>Probable LRR receptor-like serine/threonine-protein kinase At1g07650</fullName>
        <ecNumber>2.7.11.1</ecNumber>
    </recommendedName>
</protein>
<comment type="catalytic activity">
    <reaction>
        <text>L-seryl-[protein] + ATP = O-phospho-L-seryl-[protein] + ADP + H(+)</text>
        <dbReference type="Rhea" id="RHEA:17989"/>
        <dbReference type="Rhea" id="RHEA-COMP:9863"/>
        <dbReference type="Rhea" id="RHEA-COMP:11604"/>
        <dbReference type="ChEBI" id="CHEBI:15378"/>
        <dbReference type="ChEBI" id="CHEBI:29999"/>
        <dbReference type="ChEBI" id="CHEBI:30616"/>
        <dbReference type="ChEBI" id="CHEBI:83421"/>
        <dbReference type="ChEBI" id="CHEBI:456216"/>
        <dbReference type="EC" id="2.7.11.1"/>
    </reaction>
</comment>
<comment type="catalytic activity">
    <reaction>
        <text>L-threonyl-[protein] + ATP = O-phospho-L-threonyl-[protein] + ADP + H(+)</text>
        <dbReference type="Rhea" id="RHEA:46608"/>
        <dbReference type="Rhea" id="RHEA-COMP:11060"/>
        <dbReference type="Rhea" id="RHEA-COMP:11605"/>
        <dbReference type="ChEBI" id="CHEBI:15378"/>
        <dbReference type="ChEBI" id="CHEBI:30013"/>
        <dbReference type="ChEBI" id="CHEBI:30616"/>
        <dbReference type="ChEBI" id="CHEBI:61977"/>
        <dbReference type="ChEBI" id="CHEBI:456216"/>
        <dbReference type="EC" id="2.7.11.1"/>
    </reaction>
</comment>
<comment type="interaction">
    <interactant intactId="EBI-16954597">
        <id>C0LGE0</id>
    </interactant>
    <interactant intactId="EBI-20651261">
        <id>Q9SHI2</id>
        <label>At1g17230</label>
    </interactant>
    <organismsDiffer>false</organismsDiffer>
    <experiments>3</experiments>
</comment>
<comment type="interaction">
    <interactant intactId="EBI-16954597">
        <id>C0LGE0</id>
    </interactant>
    <interactant intactId="EBI-20651291">
        <id>Q9LP24-3</id>
        <label>At1g35710</label>
    </interactant>
    <organismsDiffer>false</organismsDiffer>
    <experiments>3</experiments>
</comment>
<comment type="interaction">
    <interactant intactId="EBI-16954597">
        <id>C0LGE0</id>
    </interactant>
    <interactant intactId="EBI-20651307">
        <id>F4I2N7-2</id>
        <label>RLK7</label>
    </interactant>
    <organismsDiffer>false</organismsDiffer>
    <experiments>3</experiments>
</comment>
<comment type="subcellular location">
    <subcellularLocation>
        <location evidence="8">Membrane</location>
        <topology evidence="8">Single-pass type I membrane protein</topology>
    </subcellularLocation>
</comment>
<comment type="alternative products">
    <event type="alternative splicing"/>
    <isoform>
        <id>C0LGE0-1</id>
        <name>1</name>
        <sequence type="displayed"/>
    </isoform>
    <isoform>
        <id>C0LGE0-2</id>
        <name>2</name>
        <sequence type="described" ref="VSP_038292"/>
    </isoform>
</comment>
<comment type="similarity">
    <text evidence="3">Belongs to the protein kinase superfamily. Ser/Thr protein kinase family.</text>
</comment>
<comment type="sequence caution" evidence="8">
    <conflict type="erroneous gene model prediction">
        <sequence resource="EMBL-CDS" id="AAF75092"/>
    </conflict>
</comment>
<comment type="sequence caution" evidence="8">
    <conflict type="erroneous gene model prediction">
        <sequence resource="EMBL-CDS" id="AAF75093"/>
    </conflict>
</comment>
<gene>
    <name type="ordered locus">At1g07650</name>
    <name type="ORF">F24B9.28</name>
    <name type="ORF">F24B9.29</name>
</gene>
<dbReference type="EC" id="2.7.11.1"/>
<dbReference type="EMBL" id="AC007583">
    <property type="protein sequence ID" value="AAF75092.1"/>
    <property type="status" value="ALT_SEQ"/>
    <property type="molecule type" value="Genomic_DNA"/>
</dbReference>
<dbReference type="EMBL" id="AC007583">
    <property type="protein sequence ID" value="AAF75093.1"/>
    <property type="status" value="ALT_SEQ"/>
    <property type="molecule type" value="Genomic_DNA"/>
</dbReference>
<dbReference type="EMBL" id="CP002684">
    <property type="protein sequence ID" value="AEE28155.1"/>
    <property type="molecule type" value="Genomic_DNA"/>
</dbReference>
<dbReference type="EMBL" id="AF370513">
    <property type="protein sequence ID" value="AAK43890.1"/>
    <property type="molecule type" value="mRNA"/>
</dbReference>
<dbReference type="EMBL" id="BT000348">
    <property type="protein sequence ID" value="AAN15667.1"/>
    <property type="molecule type" value="mRNA"/>
</dbReference>
<dbReference type="EMBL" id="AK221671">
    <property type="protein sequence ID" value="BAD95357.1"/>
    <property type="molecule type" value="mRNA"/>
</dbReference>
<dbReference type="EMBL" id="FJ708629">
    <property type="protein sequence ID" value="ACN59225.1"/>
    <property type="molecule type" value="mRNA"/>
</dbReference>
<dbReference type="PIR" id="A86211">
    <property type="entry name" value="A86211"/>
</dbReference>
<dbReference type="PIR" id="B86211">
    <property type="entry name" value="B86211"/>
</dbReference>
<dbReference type="RefSeq" id="NP_172244.2">
    <molecule id="C0LGE0-1"/>
    <property type="nucleotide sequence ID" value="NM_100638.5"/>
</dbReference>
<dbReference type="SMR" id="C0LGE0"/>
<dbReference type="BioGRID" id="22519">
    <property type="interactions" value="52"/>
</dbReference>
<dbReference type="FunCoup" id="C0LGE0">
    <property type="interactions" value="1030"/>
</dbReference>
<dbReference type="IntAct" id="C0LGE0">
    <property type="interactions" value="53"/>
</dbReference>
<dbReference type="STRING" id="3702.C0LGE0"/>
<dbReference type="CAZy" id="CBM57">
    <property type="family name" value="Carbohydrate-Binding Module Family 57"/>
</dbReference>
<dbReference type="GlyGen" id="C0LGE0">
    <property type="glycosylation" value="13 sites"/>
</dbReference>
<dbReference type="iPTMnet" id="C0LGE0"/>
<dbReference type="PaxDb" id="3702-AT1G07650.2"/>
<dbReference type="ProteomicsDB" id="242422">
    <molecule id="C0LGE0-1"/>
</dbReference>
<dbReference type="EnsemblPlants" id="AT1G07650.1">
    <molecule id="C0LGE0-1"/>
    <property type="protein sequence ID" value="AT1G07650.1"/>
    <property type="gene ID" value="AT1G07650"/>
</dbReference>
<dbReference type="GeneID" id="837278"/>
<dbReference type="Gramene" id="AT1G07650.1">
    <molecule id="C0LGE0-1"/>
    <property type="protein sequence ID" value="AT1G07650.1"/>
    <property type="gene ID" value="AT1G07650"/>
</dbReference>
<dbReference type="KEGG" id="ath:AT1G07650"/>
<dbReference type="Araport" id="AT1G07650"/>
<dbReference type="TAIR" id="AT1G07650"/>
<dbReference type="eggNOG" id="ENOG502QTCP">
    <property type="taxonomic scope" value="Eukaryota"/>
</dbReference>
<dbReference type="HOGENOM" id="CLU_000288_114_2_1"/>
<dbReference type="InParanoid" id="C0LGE0"/>
<dbReference type="OrthoDB" id="1893746at2759"/>
<dbReference type="PhylomeDB" id="C0LGE0"/>
<dbReference type="PRO" id="PR:C0LGE0"/>
<dbReference type="Proteomes" id="UP000006548">
    <property type="component" value="Chromosome 1"/>
</dbReference>
<dbReference type="ExpressionAtlas" id="C0LGE0">
    <property type="expression patterns" value="baseline and differential"/>
</dbReference>
<dbReference type="GO" id="GO:0016020">
    <property type="term" value="C:membrane"/>
    <property type="evidence" value="ECO:0007669"/>
    <property type="project" value="UniProtKB-SubCell"/>
</dbReference>
<dbReference type="GO" id="GO:0005524">
    <property type="term" value="F:ATP binding"/>
    <property type="evidence" value="ECO:0007669"/>
    <property type="project" value="UniProtKB-KW"/>
</dbReference>
<dbReference type="GO" id="GO:0106310">
    <property type="term" value="F:protein serine kinase activity"/>
    <property type="evidence" value="ECO:0007669"/>
    <property type="project" value="RHEA"/>
</dbReference>
<dbReference type="GO" id="GO:0004674">
    <property type="term" value="F:protein serine/threonine kinase activity"/>
    <property type="evidence" value="ECO:0007669"/>
    <property type="project" value="UniProtKB-KW"/>
</dbReference>
<dbReference type="CDD" id="cd14066">
    <property type="entry name" value="STKc_IRAK"/>
    <property type="match status" value="1"/>
</dbReference>
<dbReference type="FunFam" id="3.30.200.20:FF:000217">
    <property type="entry name" value="probable LRR receptor-like serine/threonine-protein kinase At1g53430"/>
    <property type="match status" value="1"/>
</dbReference>
<dbReference type="FunFam" id="3.80.10.10:FF:000452">
    <property type="entry name" value="Probable LRR receptor-like serine/threonine-protein kinase RFK1"/>
    <property type="match status" value="1"/>
</dbReference>
<dbReference type="FunFam" id="2.60.120.430:FF:000004">
    <property type="entry name" value="Putative leucine-rich repeat receptor-like serine/threonine-protein kinase"/>
    <property type="match status" value="1"/>
</dbReference>
<dbReference type="FunFam" id="1.10.510.10:FF:000044">
    <property type="entry name" value="Putative LRR receptor-like serine/threonine-protein kinase"/>
    <property type="match status" value="1"/>
</dbReference>
<dbReference type="FunFam" id="3.80.10.10:FF:000433">
    <property type="entry name" value="Putative LRR receptor-like serine/threonine-protein kinase isoform A"/>
    <property type="match status" value="1"/>
</dbReference>
<dbReference type="Gene3D" id="2.60.120.430">
    <property type="entry name" value="Galactose-binding lectin"/>
    <property type="match status" value="1"/>
</dbReference>
<dbReference type="Gene3D" id="3.30.200.20">
    <property type="entry name" value="Phosphorylase Kinase, domain 1"/>
    <property type="match status" value="1"/>
</dbReference>
<dbReference type="Gene3D" id="3.80.10.10">
    <property type="entry name" value="Ribonuclease Inhibitor"/>
    <property type="match status" value="3"/>
</dbReference>
<dbReference type="Gene3D" id="1.10.510.10">
    <property type="entry name" value="Transferase(Phosphotransferase) domain 1"/>
    <property type="match status" value="1"/>
</dbReference>
<dbReference type="InterPro" id="IPR011009">
    <property type="entry name" value="Kinase-like_dom_sf"/>
</dbReference>
<dbReference type="InterPro" id="IPR001611">
    <property type="entry name" value="Leu-rich_rpt"/>
</dbReference>
<dbReference type="InterPro" id="IPR003591">
    <property type="entry name" value="Leu-rich_rpt_typical-subtyp"/>
</dbReference>
<dbReference type="InterPro" id="IPR032675">
    <property type="entry name" value="LRR_dom_sf"/>
</dbReference>
<dbReference type="InterPro" id="IPR051824">
    <property type="entry name" value="LRR_Rcpt-Like_S/T_Kinase"/>
</dbReference>
<dbReference type="InterPro" id="IPR021720">
    <property type="entry name" value="Malectin_dom"/>
</dbReference>
<dbReference type="InterPro" id="IPR000719">
    <property type="entry name" value="Prot_kinase_dom"/>
</dbReference>
<dbReference type="InterPro" id="IPR017441">
    <property type="entry name" value="Protein_kinase_ATP_BS"/>
</dbReference>
<dbReference type="InterPro" id="IPR001245">
    <property type="entry name" value="Ser-Thr/Tyr_kinase_cat_dom"/>
</dbReference>
<dbReference type="InterPro" id="IPR008271">
    <property type="entry name" value="Ser/Thr_kinase_AS"/>
</dbReference>
<dbReference type="PANTHER" id="PTHR48006">
    <property type="entry name" value="LEUCINE-RICH REPEAT-CONTAINING PROTEIN DDB_G0281931-RELATED"/>
    <property type="match status" value="1"/>
</dbReference>
<dbReference type="PANTHER" id="PTHR48006:SF68">
    <property type="entry name" value="PROTEIN KINASE DOMAIN-CONTAINING PROTEIN"/>
    <property type="match status" value="1"/>
</dbReference>
<dbReference type="Pfam" id="PF00560">
    <property type="entry name" value="LRR_1"/>
    <property type="match status" value="3"/>
</dbReference>
<dbReference type="Pfam" id="PF13855">
    <property type="entry name" value="LRR_8"/>
    <property type="match status" value="1"/>
</dbReference>
<dbReference type="Pfam" id="PF11721">
    <property type="entry name" value="Malectin"/>
    <property type="match status" value="1"/>
</dbReference>
<dbReference type="Pfam" id="PF07714">
    <property type="entry name" value="PK_Tyr_Ser-Thr"/>
    <property type="match status" value="1"/>
</dbReference>
<dbReference type="PRINTS" id="PR00019">
    <property type="entry name" value="LEURICHRPT"/>
</dbReference>
<dbReference type="SMART" id="SM00369">
    <property type="entry name" value="LRR_TYP"/>
    <property type="match status" value="3"/>
</dbReference>
<dbReference type="SMART" id="SM00220">
    <property type="entry name" value="S_TKc"/>
    <property type="match status" value="1"/>
</dbReference>
<dbReference type="SUPFAM" id="SSF52058">
    <property type="entry name" value="L domain-like"/>
    <property type="match status" value="1"/>
</dbReference>
<dbReference type="SUPFAM" id="SSF56112">
    <property type="entry name" value="Protein kinase-like (PK-like)"/>
    <property type="match status" value="1"/>
</dbReference>
<dbReference type="PROSITE" id="PS00107">
    <property type="entry name" value="PROTEIN_KINASE_ATP"/>
    <property type="match status" value="1"/>
</dbReference>
<dbReference type="PROSITE" id="PS50011">
    <property type="entry name" value="PROTEIN_KINASE_DOM"/>
    <property type="match status" value="1"/>
</dbReference>
<dbReference type="PROSITE" id="PS00108">
    <property type="entry name" value="PROTEIN_KINASE_ST"/>
    <property type="match status" value="1"/>
</dbReference>
<proteinExistence type="evidence at protein level"/>
<keyword id="KW-0025">Alternative splicing</keyword>
<keyword id="KW-0067">ATP-binding</keyword>
<keyword id="KW-0325">Glycoprotein</keyword>
<keyword id="KW-0418">Kinase</keyword>
<keyword id="KW-0433">Leucine-rich repeat</keyword>
<keyword id="KW-0472">Membrane</keyword>
<keyword id="KW-0547">Nucleotide-binding</keyword>
<keyword id="KW-0597">Phosphoprotein</keyword>
<keyword id="KW-0675">Receptor</keyword>
<keyword id="KW-1185">Reference proteome</keyword>
<keyword id="KW-0677">Repeat</keyword>
<keyword id="KW-0723">Serine/threonine-protein kinase</keyword>
<keyword id="KW-0732">Signal</keyword>
<keyword id="KW-0808">Transferase</keyword>
<keyword id="KW-0812">Transmembrane</keyword>
<keyword id="KW-1133">Transmembrane helix</keyword>
<organism>
    <name type="scientific">Arabidopsis thaliana</name>
    <name type="common">Mouse-ear cress</name>
    <dbReference type="NCBI Taxonomy" id="3702"/>
    <lineage>
        <taxon>Eukaryota</taxon>
        <taxon>Viridiplantae</taxon>
        <taxon>Streptophyta</taxon>
        <taxon>Embryophyta</taxon>
        <taxon>Tracheophyta</taxon>
        <taxon>Spermatophyta</taxon>
        <taxon>Magnoliopsida</taxon>
        <taxon>eudicotyledons</taxon>
        <taxon>Gunneridae</taxon>
        <taxon>Pentapetalae</taxon>
        <taxon>rosids</taxon>
        <taxon>malvids</taxon>
        <taxon>Brassicales</taxon>
        <taxon>Brassicaceae</taxon>
        <taxon>Camelineae</taxon>
        <taxon>Arabidopsis</taxon>
    </lineage>
</organism>
<evidence type="ECO:0000250" key="1">
    <source>
        <dbReference type="UniProtKB" id="O48814"/>
    </source>
</evidence>
<evidence type="ECO:0000255" key="2"/>
<evidence type="ECO:0000255" key="3">
    <source>
        <dbReference type="PROSITE-ProRule" id="PRU00159"/>
    </source>
</evidence>
<evidence type="ECO:0000255" key="4">
    <source>
        <dbReference type="PROSITE-ProRule" id="PRU10027"/>
    </source>
</evidence>
<evidence type="ECO:0000256" key="5">
    <source>
        <dbReference type="SAM" id="MobiDB-lite"/>
    </source>
</evidence>
<evidence type="ECO:0000303" key="6">
    <source>
    </source>
</evidence>
<evidence type="ECO:0000303" key="7">
    <source ref="4"/>
</evidence>
<evidence type="ECO:0000305" key="8"/>
<evidence type="ECO:0007744" key="9">
    <source>
    </source>
</evidence>
<accession>C0LGE0</accession>
<accession>Q94JZ3</accession>
<accession>Q9LQN8</accession>
<accession>Q9LQN9</accession>
<feature type="signal peptide" evidence="2">
    <location>
        <begin position="1"/>
        <end position="23"/>
    </location>
</feature>
<feature type="chain" id="PRO_0000387545" description="Probable LRR receptor-like serine/threonine-protein kinase At1g07650">
    <location>
        <begin position="24"/>
        <end position="1014"/>
    </location>
</feature>
<feature type="topological domain" description="Extracellular" evidence="2">
    <location>
        <begin position="24"/>
        <end position="619"/>
    </location>
</feature>
<feature type="transmembrane region" description="Helical" evidence="2">
    <location>
        <begin position="620"/>
        <end position="640"/>
    </location>
</feature>
<feature type="topological domain" description="Cytoplasmic" evidence="2">
    <location>
        <begin position="641"/>
        <end position="1014"/>
    </location>
</feature>
<feature type="repeat" description="LRR 1">
    <location>
        <begin position="89"/>
        <end position="112"/>
    </location>
</feature>
<feature type="repeat" description="LRR 2">
    <location>
        <begin position="113"/>
        <end position="137"/>
    </location>
</feature>
<feature type="repeat" description="LRR 3">
    <location>
        <begin position="139"/>
        <end position="160"/>
    </location>
</feature>
<feature type="repeat" description="LRR 4">
    <location>
        <begin position="161"/>
        <end position="184"/>
    </location>
</feature>
<feature type="repeat" description="LRR 5">
    <location>
        <begin position="186"/>
        <end position="207"/>
    </location>
</feature>
<feature type="repeat" description="LRR 6">
    <location>
        <begin position="208"/>
        <end position="234"/>
    </location>
</feature>
<feature type="repeat" description="LRR 7">
    <location>
        <begin position="256"/>
        <end position="279"/>
    </location>
</feature>
<feature type="repeat" description="LRR 8">
    <location>
        <begin position="280"/>
        <end position="304"/>
    </location>
</feature>
<feature type="repeat" description="LRR 9">
    <location>
        <begin position="305"/>
        <end position="327"/>
    </location>
</feature>
<feature type="repeat" description="LRR 10">
    <location>
        <begin position="329"/>
        <end position="352"/>
    </location>
</feature>
<feature type="repeat" description="LRR 11">
    <location>
        <begin position="354"/>
        <end position="376"/>
    </location>
</feature>
<feature type="repeat" description="LRR 12">
    <location>
        <begin position="516"/>
        <end position="539"/>
    </location>
</feature>
<feature type="domain" description="Protein kinase" evidence="3">
    <location>
        <begin position="678"/>
        <end position="960"/>
    </location>
</feature>
<feature type="region of interest" description="Disordered" evidence="5">
    <location>
        <begin position="989"/>
        <end position="1014"/>
    </location>
</feature>
<feature type="compositionally biased region" description="Polar residues" evidence="5">
    <location>
        <begin position="989"/>
        <end position="1002"/>
    </location>
</feature>
<feature type="active site" description="Proton acceptor" evidence="3 4">
    <location>
        <position position="805"/>
    </location>
</feature>
<feature type="binding site" evidence="3">
    <location>
        <begin position="684"/>
        <end position="692"/>
    </location>
    <ligand>
        <name>ATP</name>
        <dbReference type="ChEBI" id="CHEBI:30616"/>
    </ligand>
</feature>
<feature type="binding site" evidence="3">
    <location>
        <position position="706"/>
    </location>
    <ligand>
        <name>ATP</name>
        <dbReference type="ChEBI" id="CHEBI:30616"/>
    </ligand>
</feature>
<feature type="modified residue" description="Phosphothreonine" evidence="1">
    <location>
        <position position="667"/>
    </location>
</feature>
<feature type="modified residue" description="Phosphotyrosine" evidence="1">
    <location>
        <position position="751"/>
    </location>
</feature>
<feature type="modified residue" description="Phosphoserine" evidence="1">
    <location>
        <position position="809"/>
    </location>
</feature>
<feature type="modified residue" description="Phosphoserine" evidence="1">
    <location>
        <position position="838"/>
    </location>
</feature>
<feature type="modified residue" description="Phosphothreonine" evidence="1">
    <location>
        <position position="839"/>
    </location>
</feature>
<feature type="modified residue" description="Phosphothreonine" evidence="1">
    <location>
        <position position="844"/>
    </location>
</feature>
<feature type="modified residue" description="Phosphotyrosine" evidence="1">
    <location>
        <position position="852"/>
    </location>
</feature>
<feature type="modified residue" description="Phosphoserine" evidence="9">
    <location>
        <position position="989"/>
    </location>
</feature>
<feature type="glycosylation site" description="N-linked (GlcNAc...) asparagine" evidence="2">
    <location>
        <position position="76"/>
    </location>
</feature>
<feature type="glycosylation site" description="N-linked (GlcNAc...) asparagine" evidence="2">
    <location>
        <position position="87"/>
    </location>
</feature>
<feature type="glycosylation site" description="N-linked (GlcNAc...) asparagine" evidence="2">
    <location>
        <position position="101"/>
    </location>
</feature>
<feature type="glycosylation site" description="N-linked (GlcNAc...) asparagine" evidence="2">
    <location>
        <position position="165"/>
    </location>
</feature>
<feature type="glycosylation site" description="N-linked (GlcNAc...) asparagine" evidence="2">
    <location>
        <position position="210"/>
    </location>
</feature>
<feature type="glycosylation site" description="N-linked (GlcNAc...) asparagine" evidence="2">
    <location>
        <position position="220"/>
    </location>
</feature>
<feature type="glycosylation site" description="N-linked (GlcNAc...) asparagine" evidence="2">
    <location>
        <position position="231"/>
    </location>
</feature>
<feature type="glycosylation site" description="N-linked (GlcNAc...) asparagine" evidence="2">
    <location>
        <position position="362"/>
    </location>
</feature>
<feature type="glycosylation site" description="N-linked (GlcNAc...) asparagine" evidence="2">
    <location>
        <position position="389"/>
    </location>
</feature>
<feature type="glycosylation site" description="N-linked (GlcNAc...) asparagine" evidence="2">
    <location>
        <position position="474"/>
    </location>
</feature>
<feature type="glycosylation site" description="N-linked (GlcNAc...) asparagine" evidence="2">
    <location>
        <position position="481"/>
    </location>
</feature>
<feature type="glycosylation site" description="N-linked (GlcNAc...) asparagine" evidence="2">
    <location>
        <position position="511"/>
    </location>
</feature>
<feature type="glycosylation site" description="N-linked (GlcNAc...) asparagine" evidence="2">
    <location>
        <position position="570"/>
    </location>
</feature>
<feature type="splice variant" id="VSP_038292" description="In isoform 2." evidence="6 7">
    <location>
        <begin position="392"/>
        <end position="1014"/>
    </location>
</feature>
<reference key="1">
    <citation type="journal article" date="2000" name="Nature">
        <title>Sequence and analysis of chromosome 1 of the plant Arabidopsis thaliana.</title>
        <authorList>
            <person name="Theologis A."/>
            <person name="Ecker J.R."/>
            <person name="Palm C.J."/>
            <person name="Federspiel N.A."/>
            <person name="Kaul S."/>
            <person name="White O."/>
            <person name="Alonso J."/>
            <person name="Altafi H."/>
            <person name="Araujo R."/>
            <person name="Bowman C.L."/>
            <person name="Brooks S.Y."/>
            <person name="Buehler E."/>
            <person name="Chan A."/>
            <person name="Chao Q."/>
            <person name="Chen H."/>
            <person name="Cheuk R.F."/>
            <person name="Chin C.W."/>
            <person name="Chung M.K."/>
            <person name="Conn L."/>
            <person name="Conway A.B."/>
            <person name="Conway A.R."/>
            <person name="Creasy T.H."/>
            <person name="Dewar K."/>
            <person name="Dunn P."/>
            <person name="Etgu P."/>
            <person name="Feldblyum T.V."/>
            <person name="Feng J.-D."/>
            <person name="Fong B."/>
            <person name="Fujii C.Y."/>
            <person name="Gill J.E."/>
            <person name="Goldsmith A.D."/>
            <person name="Haas B."/>
            <person name="Hansen N.F."/>
            <person name="Hughes B."/>
            <person name="Huizar L."/>
            <person name="Hunter J.L."/>
            <person name="Jenkins J."/>
            <person name="Johnson-Hopson C."/>
            <person name="Khan S."/>
            <person name="Khaykin E."/>
            <person name="Kim C.J."/>
            <person name="Koo H.L."/>
            <person name="Kremenetskaia I."/>
            <person name="Kurtz D.B."/>
            <person name="Kwan A."/>
            <person name="Lam B."/>
            <person name="Langin-Hooper S."/>
            <person name="Lee A."/>
            <person name="Lee J.M."/>
            <person name="Lenz C.A."/>
            <person name="Li J.H."/>
            <person name="Li Y.-P."/>
            <person name="Lin X."/>
            <person name="Liu S.X."/>
            <person name="Liu Z.A."/>
            <person name="Luros J.S."/>
            <person name="Maiti R."/>
            <person name="Marziali A."/>
            <person name="Militscher J."/>
            <person name="Miranda M."/>
            <person name="Nguyen M."/>
            <person name="Nierman W.C."/>
            <person name="Osborne B.I."/>
            <person name="Pai G."/>
            <person name="Peterson J."/>
            <person name="Pham P.K."/>
            <person name="Rizzo M."/>
            <person name="Rooney T."/>
            <person name="Rowley D."/>
            <person name="Sakano H."/>
            <person name="Salzberg S.L."/>
            <person name="Schwartz J.R."/>
            <person name="Shinn P."/>
            <person name="Southwick A.M."/>
            <person name="Sun H."/>
            <person name="Tallon L.J."/>
            <person name="Tambunga G."/>
            <person name="Toriumi M.J."/>
            <person name="Town C.D."/>
            <person name="Utterback T."/>
            <person name="Van Aken S."/>
            <person name="Vaysberg M."/>
            <person name="Vysotskaia V.S."/>
            <person name="Walker M."/>
            <person name="Wu D."/>
            <person name="Yu G."/>
            <person name="Fraser C.M."/>
            <person name="Venter J.C."/>
            <person name="Davis R.W."/>
        </authorList>
    </citation>
    <scope>NUCLEOTIDE SEQUENCE [LARGE SCALE GENOMIC DNA]</scope>
    <source>
        <strain>cv. Columbia</strain>
    </source>
</reference>
<reference key="2">
    <citation type="journal article" date="2017" name="Plant J.">
        <title>Araport11: a complete reannotation of the Arabidopsis thaliana reference genome.</title>
        <authorList>
            <person name="Cheng C.Y."/>
            <person name="Krishnakumar V."/>
            <person name="Chan A.P."/>
            <person name="Thibaud-Nissen F."/>
            <person name="Schobel S."/>
            <person name="Town C.D."/>
        </authorList>
    </citation>
    <scope>GENOME REANNOTATION</scope>
    <source>
        <strain>cv. Columbia</strain>
    </source>
</reference>
<reference key="3">
    <citation type="journal article" date="2003" name="Science">
        <title>Empirical analysis of transcriptional activity in the Arabidopsis genome.</title>
        <authorList>
            <person name="Yamada K."/>
            <person name="Lim J."/>
            <person name="Dale J.M."/>
            <person name="Chen H."/>
            <person name="Shinn P."/>
            <person name="Palm C.J."/>
            <person name="Southwick A.M."/>
            <person name="Wu H.C."/>
            <person name="Kim C.J."/>
            <person name="Nguyen M."/>
            <person name="Pham P.K."/>
            <person name="Cheuk R.F."/>
            <person name="Karlin-Newmann G."/>
            <person name="Liu S.X."/>
            <person name="Lam B."/>
            <person name="Sakano H."/>
            <person name="Wu T."/>
            <person name="Yu G."/>
            <person name="Miranda M."/>
            <person name="Quach H.L."/>
            <person name="Tripp M."/>
            <person name="Chang C.H."/>
            <person name="Lee J.M."/>
            <person name="Toriumi M.J."/>
            <person name="Chan M.M."/>
            <person name="Tang C.C."/>
            <person name="Onodera C.S."/>
            <person name="Deng J.M."/>
            <person name="Akiyama K."/>
            <person name="Ansari Y."/>
            <person name="Arakawa T."/>
            <person name="Banh J."/>
            <person name="Banno F."/>
            <person name="Bowser L."/>
            <person name="Brooks S.Y."/>
            <person name="Carninci P."/>
            <person name="Chao Q."/>
            <person name="Choy N."/>
            <person name="Enju A."/>
            <person name="Goldsmith A.D."/>
            <person name="Gurjal M."/>
            <person name="Hansen N.F."/>
            <person name="Hayashizaki Y."/>
            <person name="Johnson-Hopson C."/>
            <person name="Hsuan V.W."/>
            <person name="Iida K."/>
            <person name="Karnes M."/>
            <person name="Khan S."/>
            <person name="Koesema E."/>
            <person name="Ishida J."/>
            <person name="Jiang P.X."/>
            <person name="Jones T."/>
            <person name="Kawai J."/>
            <person name="Kamiya A."/>
            <person name="Meyers C."/>
            <person name="Nakajima M."/>
            <person name="Narusaka M."/>
            <person name="Seki M."/>
            <person name="Sakurai T."/>
            <person name="Satou M."/>
            <person name="Tamse R."/>
            <person name="Vaysberg M."/>
            <person name="Wallender E.K."/>
            <person name="Wong C."/>
            <person name="Yamamura Y."/>
            <person name="Yuan S."/>
            <person name="Shinozaki K."/>
            <person name="Davis R.W."/>
            <person name="Theologis A."/>
            <person name="Ecker J.R."/>
        </authorList>
    </citation>
    <scope>NUCLEOTIDE SEQUENCE [LARGE SCALE MRNA] (ISOFORM 2)</scope>
    <source>
        <strain>cv. Columbia</strain>
    </source>
</reference>
<reference key="4">
    <citation type="submission" date="2005-03" db="EMBL/GenBank/DDBJ databases">
        <title>Large-scale analysis of RIKEN Arabidopsis full-length (RAFL) cDNAs.</title>
        <authorList>
            <person name="Totoki Y."/>
            <person name="Seki M."/>
            <person name="Ishida J."/>
            <person name="Nakajima M."/>
            <person name="Enju A."/>
            <person name="Kamiya A."/>
            <person name="Narusaka M."/>
            <person name="Shin-i T."/>
            <person name="Nakagawa M."/>
            <person name="Sakamoto N."/>
            <person name="Oishi K."/>
            <person name="Kohara Y."/>
            <person name="Kobayashi M."/>
            <person name="Toyoda A."/>
            <person name="Sakaki Y."/>
            <person name="Sakurai T."/>
            <person name="Iida K."/>
            <person name="Akiyama K."/>
            <person name="Satou M."/>
            <person name="Toyoda T."/>
            <person name="Konagaya A."/>
            <person name="Carninci P."/>
            <person name="Kawai J."/>
            <person name="Hayashizaki Y."/>
            <person name="Shinozaki K."/>
        </authorList>
    </citation>
    <scope>NUCLEOTIDE SEQUENCE [LARGE SCALE MRNA] (ISOFORM 2)</scope>
    <source>
        <strain>cv. Columbia</strain>
    </source>
</reference>
<reference key="5">
    <citation type="journal article" date="2010" name="BMC Genomics">
        <title>Genome-wide cloning and sequence analysis of leucine-rich repeat receptor-like protein kinase genes in Arabidopsis thaliana.</title>
        <authorList>
            <person name="Gou X."/>
            <person name="He K."/>
            <person name="Yang H."/>
            <person name="Yuan T."/>
            <person name="Lin H."/>
            <person name="Clouse S.D."/>
            <person name="Li J."/>
        </authorList>
    </citation>
    <scope>NUCLEOTIDE SEQUENCE [LARGE SCALE MRNA] (ISOFORM 1)</scope>
    <source>
        <strain>cv. Columbia</strain>
    </source>
</reference>
<reference key="6">
    <citation type="journal article" date="2009" name="Plant Physiol.">
        <title>Large-scale Arabidopsis phosphoproteome profiling reveals novel chloroplast kinase substrates and phosphorylation networks.</title>
        <authorList>
            <person name="Reiland S."/>
            <person name="Messerli G."/>
            <person name="Baerenfaller K."/>
            <person name="Gerrits B."/>
            <person name="Endler A."/>
            <person name="Grossmann J."/>
            <person name="Gruissem W."/>
            <person name="Baginsky S."/>
        </authorList>
    </citation>
    <scope>PHOSPHORYLATION [LARGE SCALE ANALYSIS] AT SER-989</scope>
    <scope>IDENTIFICATION BY MASS SPECTROMETRY [LARGE SCALE ANALYSIS]</scope>
</reference>
<sequence>MIYLHRIYFIIVLFTLIFHGRLGFSDNNKLHEAEVRALKEIGKKLGKKDWDFNKDPCSGEGTWIVTTYTTKGFESNITCDCSFLPQNSSCHVIRIALKSQNLTGIVPPEFSKLRHLKVLDLSRNSLTGSIPKEWASMRLEDLSFMGNRLSGPFPKVLTRLTMLRNLSLEGNQFSGPIPPDIGQLVHLEKLHLPSNAFTGPLTEKLGLLKNLTDMRISDNNFTGPIPDFISNWTRILKLQMHGCGLDGPIPSSISSLTSLTDLRISDLGGKPSSFPPLKNLESIKTLILRKCKIIGPIPKYIGDLKKLKTLDLSFNLLSGEIPSSFENMKKADFIYLTGNKLTGGVPNYFVERNKNVDVSFNNFTDESSIPSHDCNRVTSNLVESFALGNKSHKGSTCFLQRMPCVHPKRYHLYKLYINCGGGEVKVDKEITYQADDEPKGASMYVLGANKRWALSSTGNFMDNDDDADEYTVQNTSRLSVNASSPSFGLYRTARVSPLSLTYYGICLGNGNYTVNLHFAEIIFTDDNTLYSLGKRLFDIYVQDQLVIKNFNIQEAARGSGKPIIKSFLVNVTDHTLKIGLRWAGKGTTGIPIRGVYGPMISAISVEPNFKPPVYYDTKDIILKVGVPVAAATLLLFIIVGVFWKKRRDKNDIDKELRGLDLQTGTFTLRQIKAATDNFDVTRKIGEGGFGSVYKGELSEGKLIAVKQLSAKSRQGNREFVNEIGMISALQHPNLVKLYGCCVEGNQLILVYEYLENNCLSRALFGKDESSRLKLDWSTRKKIFLGIAKGLTFLHEESRIKIVHRDIKASNVLLDKDLNAKISDFGLAKLNDDGNTHISTRIAGTIGYMAPEYAMRGYLTEKADVYSFGVVALEIVSGKSNTNFRPTEDFVYLLDWAYVLQERGSLLELVDPTLASDYSEEEAMLMLNVALMCTNASPTLRPTMSQVVSLIEGKTAMQELLSDPSFSTVNPKLKALRNHFWQNELSRSLSFSTSGPRTASANSLVDAEEKTGLLD</sequence>
<name>Y1765_ARATH</name>